<name>EFP_POLNA</name>
<feature type="chain" id="PRO_1000010801" description="Elongation factor P">
    <location>
        <begin position="1"/>
        <end position="184"/>
    </location>
</feature>
<evidence type="ECO:0000255" key="1">
    <source>
        <dbReference type="HAMAP-Rule" id="MF_00141"/>
    </source>
</evidence>
<protein>
    <recommendedName>
        <fullName evidence="1">Elongation factor P</fullName>
        <shortName evidence="1">EF-P</shortName>
    </recommendedName>
</protein>
<comment type="function">
    <text evidence="1">Involved in peptide bond synthesis. Stimulates efficient translation and peptide-bond synthesis on native or reconstituted 70S ribosomes in vitro. Probably functions indirectly by altering the affinity of the ribosome for aminoacyl-tRNA, thus increasing their reactivity as acceptors for peptidyl transferase.</text>
</comment>
<comment type="pathway">
    <text evidence="1">Protein biosynthesis; polypeptide chain elongation.</text>
</comment>
<comment type="subcellular location">
    <subcellularLocation>
        <location evidence="1">Cytoplasm</location>
    </subcellularLocation>
</comment>
<comment type="similarity">
    <text evidence="1">Belongs to the elongation factor P family.</text>
</comment>
<dbReference type="EMBL" id="CP000529">
    <property type="protein sequence ID" value="ABM36939.1"/>
    <property type="molecule type" value="Genomic_DNA"/>
</dbReference>
<dbReference type="RefSeq" id="WP_011801026.1">
    <property type="nucleotide sequence ID" value="NC_008781.1"/>
</dbReference>
<dbReference type="SMR" id="A1VMR1"/>
<dbReference type="STRING" id="365044.Pnap_1625"/>
<dbReference type="KEGG" id="pna:Pnap_1625"/>
<dbReference type="eggNOG" id="COG0231">
    <property type="taxonomic scope" value="Bacteria"/>
</dbReference>
<dbReference type="HOGENOM" id="CLU_074944_2_1_4"/>
<dbReference type="OrthoDB" id="9801844at2"/>
<dbReference type="UniPathway" id="UPA00345"/>
<dbReference type="Proteomes" id="UP000000644">
    <property type="component" value="Chromosome"/>
</dbReference>
<dbReference type="GO" id="GO:0005737">
    <property type="term" value="C:cytoplasm"/>
    <property type="evidence" value="ECO:0007669"/>
    <property type="project" value="UniProtKB-SubCell"/>
</dbReference>
<dbReference type="GO" id="GO:0003746">
    <property type="term" value="F:translation elongation factor activity"/>
    <property type="evidence" value="ECO:0007669"/>
    <property type="project" value="UniProtKB-UniRule"/>
</dbReference>
<dbReference type="GO" id="GO:0043043">
    <property type="term" value="P:peptide biosynthetic process"/>
    <property type="evidence" value="ECO:0007669"/>
    <property type="project" value="InterPro"/>
</dbReference>
<dbReference type="CDD" id="cd04470">
    <property type="entry name" value="S1_EF-P_repeat_1"/>
    <property type="match status" value="1"/>
</dbReference>
<dbReference type="CDD" id="cd05794">
    <property type="entry name" value="S1_EF-P_repeat_2"/>
    <property type="match status" value="1"/>
</dbReference>
<dbReference type="FunFam" id="2.30.30.30:FF:000003">
    <property type="entry name" value="Elongation factor P"/>
    <property type="match status" value="1"/>
</dbReference>
<dbReference type="FunFam" id="2.40.50.140:FF:000004">
    <property type="entry name" value="Elongation factor P"/>
    <property type="match status" value="1"/>
</dbReference>
<dbReference type="FunFam" id="2.40.50.140:FF:000009">
    <property type="entry name" value="Elongation factor P"/>
    <property type="match status" value="1"/>
</dbReference>
<dbReference type="Gene3D" id="2.30.30.30">
    <property type="match status" value="1"/>
</dbReference>
<dbReference type="Gene3D" id="2.40.50.140">
    <property type="entry name" value="Nucleic acid-binding proteins"/>
    <property type="match status" value="2"/>
</dbReference>
<dbReference type="HAMAP" id="MF_00141">
    <property type="entry name" value="EF_P"/>
    <property type="match status" value="1"/>
</dbReference>
<dbReference type="InterPro" id="IPR015365">
    <property type="entry name" value="Elong-fact-P_C"/>
</dbReference>
<dbReference type="InterPro" id="IPR012340">
    <property type="entry name" value="NA-bd_OB-fold"/>
</dbReference>
<dbReference type="InterPro" id="IPR014722">
    <property type="entry name" value="Rib_uL2_dom2"/>
</dbReference>
<dbReference type="InterPro" id="IPR020599">
    <property type="entry name" value="Transl_elong_fac_P/YeiP"/>
</dbReference>
<dbReference type="InterPro" id="IPR013185">
    <property type="entry name" value="Transl_elong_KOW-like"/>
</dbReference>
<dbReference type="InterPro" id="IPR001059">
    <property type="entry name" value="Transl_elong_P/YeiP_cen"/>
</dbReference>
<dbReference type="InterPro" id="IPR013852">
    <property type="entry name" value="Transl_elong_P/YeiP_CS"/>
</dbReference>
<dbReference type="InterPro" id="IPR011768">
    <property type="entry name" value="Transl_elongation_fac_P"/>
</dbReference>
<dbReference type="InterPro" id="IPR008991">
    <property type="entry name" value="Translation_prot_SH3-like_sf"/>
</dbReference>
<dbReference type="NCBIfam" id="TIGR00038">
    <property type="entry name" value="efp"/>
    <property type="match status" value="1"/>
</dbReference>
<dbReference type="NCBIfam" id="NF001810">
    <property type="entry name" value="PRK00529.1"/>
    <property type="match status" value="1"/>
</dbReference>
<dbReference type="PANTHER" id="PTHR30053">
    <property type="entry name" value="ELONGATION FACTOR P"/>
    <property type="match status" value="1"/>
</dbReference>
<dbReference type="PANTHER" id="PTHR30053:SF12">
    <property type="entry name" value="ELONGATION FACTOR P (EF-P) FAMILY PROTEIN"/>
    <property type="match status" value="1"/>
</dbReference>
<dbReference type="Pfam" id="PF01132">
    <property type="entry name" value="EFP"/>
    <property type="match status" value="1"/>
</dbReference>
<dbReference type="Pfam" id="PF08207">
    <property type="entry name" value="EFP_N"/>
    <property type="match status" value="1"/>
</dbReference>
<dbReference type="Pfam" id="PF09285">
    <property type="entry name" value="Elong-fact-P_C"/>
    <property type="match status" value="1"/>
</dbReference>
<dbReference type="PIRSF" id="PIRSF005901">
    <property type="entry name" value="EF-P"/>
    <property type="match status" value="1"/>
</dbReference>
<dbReference type="SMART" id="SM01185">
    <property type="entry name" value="EFP"/>
    <property type="match status" value="1"/>
</dbReference>
<dbReference type="SMART" id="SM00841">
    <property type="entry name" value="Elong-fact-P_C"/>
    <property type="match status" value="1"/>
</dbReference>
<dbReference type="SUPFAM" id="SSF50249">
    <property type="entry name" value="Nucleic acid-binding proteins"/>
    <property type="match status" value="2"/>
</dbReference>
<dbReference type="SUPFAM" id="SSF50104">
    <property type="entry name" value="Translation proteins SH3-like domain"/>
    <property type="match status" value="1"/>
</dbReference>
<dbReference type="PROSITE" id="PS01275">
    <property type="entry name" value="EFP"/>
    <property type="match status" value="1"/>
</dbReference>
<keyword id="KW-0963">Cytoplasm</keyword>
<keyword id="KW-0251">Elongation factor</keyword>
<keyword id="KW-0648">Protein biosynthesis</keyword>
<keyword id="KW-1185">Reference proteome</keyword>
<gene>
    <name evidence="1" type="primary">efp</name>
    <name type="ordered locus">Pnap_1625</name>
</gene>
<reference key="1">
    <citation type="journal article" date="2009" name="Environ. Microbiol.">
        <title>The genome of Polaromonas naphthalenivorans strain CJ2, isolated from coal tar-contaminated sediment, reveals physiological and metabolic versatility and evolution through extensive horizontal gene transfer.</title>
        <authorList>
            <person name="Yagi J.M."/>
            <person name="Sims D."/>
            <person name="Brettin T."/>
            <person name="Bruce D."/>
            <person name="Madsen E.L."/>
        </authorList>
    </citation>
    <scope>NUCLEOTIDE SEQUENCE [LARGE SCALE GENOMIC DNA]</scope>
    <source>
        <strain>CJ2</strain>
    </source>
</reference>
<accession>A1VMR1</accession>
<proteinExistence type="inferred from homology"/>
<sequence>MKIAQEIRAGNVIMNGKDPMVVLKTEYSRGGRNSATVRMKLKSLIANFNTEVVFKADDKIDQVILDKKECTYSYFADPMYICMDTEYNQYEVEAENMGDSLNYLQDGMELEVVFYDGKAISVEVPTSVQREITWTEPAVKGDTSGKVLKPAKLATGFEIGVPIFVAQGDVVEIDTRTGEYRKRV</sequence>
<organism>
    <name type="scientific">Polaromonas naphthalenivorans (strain CJ2)</name>
    <dbReference type="NCBI Taxonomy" id="365044"/>
    <lineage>
        <taxon>Bacteria</taxon>
        <taxon>Pseudomonadati</taxon>
        <taxon>Pseudomonadota</taxon>
        <taxon>Betaproteobacteria</taxon>
        <taxon>Burkholderiales</taxon>
        <taxon>Comamonadaceae</taxon>
        <taxon>Polaromonas</taxon>
    </lineage>
</organism>